<comment type="function">
    <text evidence="1">Probable component of a centromeric complex involved in assembly of kinetochore proteins, mitotic progression and chromosome segregation.</text>
</comment>
<comment type="subcellular location">
    <subcellularLocation>
        <location evidence="1">Nucleus</location>
    </subcellularLocation>
    <subcellularLocation>
        <location evidence="1">Chromosome</location>
        <location evidence="1">Centromere</location>
    </subcellularLocation>
    <text evidence="1">Localizes exclusively in the centromeres.</text>
</comment>
<comment type="similarity">
    <text evidence="2">Belongs to the CENP-N/CHL4 family.</text>
</comment>
<keyword id="KW-0002">3D-structure</keyword>
<keyword id="KW-0137">Centromere</keyword>
<keyword id="KW-0158">Chromosome</keyword>
<keyword id="KW-0539">Nucleus</keyword>
<keyword id="KW-1185">Reference proteome</keyword>
<evidence type="ECO:0000250" key="1"/>
<evidence type="ECO:0000305" key="2"/>
<proteinExistence type="evidence at protein level"/>
<feature type="chain" id="PRO_0000249497" description="Centromere protein N">
    <location>
        <begin position="1"/>
        <end position="344"/>
    </location>
</feature>
<protein>
    <recommendedName>
        <fullName>Centromere protein N</fullName>
        <shortName>CENP-N</shortName>
    </recommendedName>
</protein>
<accession>Q1T765</accession>
<dbReference type="EMBL" id="AB253769">
    <property type="protein sequence ID" value="BAE93421.1"/>
    <property type="molecule type" value="mRNA"/>
</dbReference>
<dbReference type="RefSeq" id="NP_001038135.1">
    <property type="nucleotide sequence ID" value="NM_001044670.2"/>
</dbReference>
<dbReference type="RefSeq" id="NP_001385224.1">
    <property type="nucleotide sequence ID" value="NM_001398295.1"/>
</dbReference>
<dbReference type="RefSeq" id="XP_015148017.1">
    <property type="nucleotide sequence ID" value="XM_015292531.1"/>
</dbReference>
<dbReference type="RefSeq" id="XP_015148018.1">
    <property type="nucleotide sequence ID" value="XM_015292532.1"/>
</dbReference>
<dbReference type="PDB" id="7BXT">
    <property type="method" value="EM"/>
    <property type="resolution" value="4.20 A"/>
    <property type="chains" value="M/N=1-211"/>
</dbReference>
<dbReference type="PDBsum" id="7BXT"/>
<dbReference type="EMDB" id="EMD-30237"/>
<dbReference type="SMR" id="Q1T765"/>
<dbReference type="FunCoup" id="Q1T765">
    <property type="interactions" value="601"/>
</dbReference>
<dbReference type="IntAct" id="Q1T765">
    <property type="interactions" value="1"/>
</dbReference>
<dbReference type="STRING" id="9031.ENSGALP00000038350"/>
<dbReference type="PaxDb" id="9031-ENSGALP00000038350"/>
<dbReference type="Ensembl" id="ENSGALT00010018712.1">
    <property type="protein sequence ID" value="ENSGALP00010010262.1"/>
    <property type="gene ID" value="ENSGALG00010007859.1"/>
</dbReference>
<dbReference type="GeneID" id="693246"/>
<dbReference type="KEGG" id="gga:693246"/>
<dbReference type="CTD" id="55839"/>
<dbReference type="VEuPathDB" id="HostDB:geneid_693246"/>
<dbReference type="eggNOG" id="ENOG502QSE8">
    <property type="taxonomic scope" value="Eukaryota"/>
</dbReference>
<dbReference type="GeneTree" id="ENSGT00390000004738"/>
<dbReference type="HOGENOM" id="CLU_070600_0_0_1"/>
<dbReference type="InParanoid" id="Q1T765"/>
<dbReference type="OrthoDB" id="6585699at2759"/>
<dbReference type="PhylomeDB" id="Q1T765"/>
<dbReference type="Reactome" id="R-GGA-141444">
    <property type="pathway name" value="Amplification of signal from unattached kinetochores via a MAD2 inhibitory signal"/>
</dbReference>
<dbReference type="Reactome" id="R-GGA-2467813">
    <property type="pathway name" value="Separation of Sister Chromatids"/>
</dbReference>
<dbReference type="Reactome" id="R-GGA-2500257">
    <property type="pathway name" value="Resolution of Sister Chromatid Cohesion"/>
</dbReference>
<dbReference type="Reactome" id="R-GGA-5663220">
    <property type="pathway name" value="RHO GTPases Activate Formins"/>
</dbReference>
<dbReference type="Reactome" id="R-GGA-606279">
    <property type="pathway name" value="Deposition of new CENPA-containing nucleosomes at the centromere"/>
</dbReference>
<dbReference type="Reactome" id="R-GGA-9648025">
    <property type="pathway name" value="EML4 and NUDC in mitotic spindle formation"/>
</dbReference>
<dbReference type="PRO" id="PR:Q1T765"/>
<dbReference type="Proteomes" id="UP000000539">
    <property type="component" value="Chromosome 11"/>
</dbReference>
<dbReference type="Bgee" id="ENSGALG00000013494">
    <property type="expression patterns" value="Expressed in spermatid and 13 other cell types or tissues"/>
</dbReference>
<dbReference type="GO" id="GO:0000775">
    <property type="term" value="C:chromosome, centromeric region"/>
    <property type="evidence" value="ECO:0007669"/>
    <property type="project" value="UniProtKB-SubCell"/>
</dbReference>
<dbReference type="GO" id="GO:0005654">
    <property type="term" value="C:nucleoplasm"/>
    <property type="evidence" value="ECO:0000318"/>
    <property type="project" value="GO_Central"/>
</dbReference>
<dbReference type="GO" id="GO:0034080">
    <property type="term" value="P:CENP-A containing chromatin assembly"/>
    <property type="evidence" value="ECO:0007669"/>
    <property type="project" value="InterPro"/>
</dbReference>
<dbReference type="GO" id="GO:0007059">
    <property type="term" value="P:chromosome segregation"/>
    <property type="evidence" value="ECO:0007669"/>
    <property type="project" value="InterPro"/>
</dbReference>
<dbReference type="InterPro" id="IPR052011">
    <property type="entry name" value="CENP-NAC/CAD_complex"/>
</dbReference>
<dbReference type="InterPro" id="IPR007902">
    <property type="entry name" value="Chl4/mis15/CENP-N"/>
</dbReference>
<dbReference type="PANTHER" id="PTHR46790">
    <property type="entry name" value="CENTROMERE PROTEIN N"/>
    <property type="match status" value="1"/>
</dbReference>
<dbReference type="PANTHER" id="PTHR46790:SF1">
    <property type="entry name" value="CENTROMERE PROTEIN N"/>
    <property type="match status" value="1"/>
</dbReference>
<dbReference type="Pfam" id="PF05238">
    <property type="entry name" value="CENP-N"/>
    <property type="match status" value="1"/>
</dbReference>
<sequence length="344" mass="40344">MDEVIVEYIRRTVLKIPRDEIMAVLQKWGFLSEAQLQTINFRQTKEGISHSVAQLCEESSADLKQAALLDIIYNHIYPNKRVWSVYHMNKTGEETDFFDFRDFKKKFRRQIQSALINVTINFREYEDNAIWIRIAWGTPYTKPNQYKTSYVVYHSQTPYVFISASVLRSNLPLLCQAMVVASNYHDIHEMELRSHCLNSLKDIVFKRYSQNFQTNYPLQERNVLTENVDLRINDENRSEKERIYRLNQESFGNGPQPKLDFAQYKLETMFKSDPKWDVLEKKEPFRCLVKFSSPHLLESLKSLAPAGLADAPLSPLLTCIPQKARNYFKIREKKSLHPGSFVSP</sequence>
<reference key="1">
    <citation type="journal article" date="2006" name="Nat. Cell Biol.">
        <title>The CENP-H-I complex is required for the efficient incorporation of newly synthesized CENP-A into centromeres.</title>
        <authorList>
            <person name="Okada M."/>
            <person name="Cheeseman I.M."/>
            <person name="Hori T."/>
            <person name="Okawa K."/>
            <person name="McLeod I.X."/>
            <person name="Yates J.R. III"/>
            <person name="Desai A."/>
            <person name="Fukagawa T."/>
        </authorList>
    </citation>
    <scope>NUCLEOTIDE SEQUENCE [MRNA]</scope>
</reference>
<gene>
    <name type="primary">CENPN</name>
</gene>
<name>CENPN_CHICK</name>
<organism>
    <name type="scientific">Gallus gallus</name>
    <name type="common">Chicken</name>
    <dbReference type="NCBI Taxonomy" id="9031"/>
    <lineage>
        <taxon>Eukaryota</taxon>
        <taxon>Metazoa</taxon>
        <taxon>Chordata</taxon>
        <taxon>Craniata</taxon>
        <taxon>Vertebrata</taxon>
        <taxon>Euteleostomi</taxon>
        <taxon>Archelosauria</taxon>
        <taxon>Archosauria</taxon>
        <taxon>Dinosauria</taxon>
        <taxon>Saurischia</taxon>
        <taxon>Theropoda</taxon>
        <taxon>Coelurosauria</taxon>
        <taxon>Aves</taxon>
        <taxon>Neognathae</taxon>
        <taxon>Galloanserae</taxon>
        <taxon>Galliformes</taxon>
        <taxon>Phasianidae</taxon>
        <taxon>Phasianinae</taxon>
        <taxon>Gallus</taxon>
    </lineage>
</organism>